<proteinExistence type="predicted"/>
<feature type="chain" id="PRO_0000346855" description="Putative zinc finger CCCH domain-containing protein 64">
    <location>
        <begin position="1"/>
        <end position="527"/>
    </location>
</feature>
<feature type="zinc finger region" description="C3H1-type" evidence="1">
    <location>
        <begin position="213"/>
        <end position="241"/>
    </location>
</feature>
<feature type="region of interest" description="Disordered" evidence="2">
    <location>
        <begin position="103"/>
        <end position="127"/>
    </location>
</feature>
<organism>
    <name type="scientific">Oryza sativa subsp. japonica</name>
    <name type="common">Rice</name>
    <dbReference type="NCBI Taxonomy" id="39947"/>
    <lineage>
        <taxon>Eukaryota</taxon>
        <taxon>Viridiplantae</taxon>
        <taxon>Streptophyta</taxon>
        <taxon>Embryophyta</taxon>
        <taxon>Tracheophyta</taxon>
        <taxon>Spermatophyta</taxon>
        <taxon>Magnoliopsida</taxon>
        <taxon>Liliopsida</taxon>
        <taxon>Poales</taxon>
        <taxon>Poaceae</taxon>
        <taxon>BOP clade</taxon>
        <taxon>Oryzoideae</taxon>
        <taxon>Oryzeae</taxon>
        <taxon>Oryzinae</taxon>
        <taxon>Oryza</taxon>
        <taxon>Oryza sativa</taxon>
    </lineage>
</organism>
<sequence length="527" mass="60054">MEKYLEDELPGDRVECLRQVEFEKDCWGETGMQLPCRLNKPVKPSVLDAQSLGVSLIAFRTLSSVKHTSRLCMTGRLGLKKGCLLVEEVGVCIPLFEPGDQVGQLRSTQTTSKRKAASRKGQREQRVNARLQEERRKDMAFAESIWTFMPGKKGSVVQGPNTRTLTNAHDGILDDINCAQIAGKHVGDHSNCANVIKAGVISLLGKLVQYPERPGEPFCRYYMKFGECKHMTFCKYNHPKDRFSCKTTNTIRSESLCLHDQQTTILENQFGLPSLVDKATANTTNLVASASSSMTPDEIGEGKNNPDEVFVCICGEKLLFHTNFNTTAVKELVVFALQRRNIKYCDIYVTWLIPMEYERMDELIDRAVRDNNNDLFYYVNLPPELINPYKDTWVTFLSDFSRYIIHQLLQYLNDTFGDPPSWIADISWVPDMWKTYNYSPNNNSTLWTPRYTLDLNSCSHFARNFLNHFGREVSLQAAEAAVSQNLEFLLPTIMMLMPVYSGPHHWNNDFMEILLNTNSDRSNGQIS</sequence>
<reference key="1">
    <citation type="journal article" date="2005" name="BMC Biol.">
        <title>The sequence of rice chromosomes 11 and 12, rich in disease resistance genes and recent gene duplications.</title>
        <authorList>
            <consortium name="The rice chromosomes 11 and 12 sequencing consortia"/>
        </authorList>
    </citation>
    <scope>NUCLEOTIDE SEQUENCE [LARGE SCALE GENOMIC DNA]</scope>
    <source>
        <strain>cv. Nipponbare</strain>
    </source>
</reference>
<reference key="2">
    <citation type="journal article" date="2005" name="Nature">
        <title>The map-based sequence of the rice genome.</title>
        <authorList>
            <consortium name="International rice genome sequencing project (IRGSP)"/>
        </authorList>
    </citation>
    <scope>NUCLEOTIDE SEQUENCE [LARGE SCALE GENOMIC DNA]</scope>
    <source>
        <strain>cv. Nipponbare</strain>
    </source>
</reference>
<reference key="3">
    <citation type="journal article" date="2013" name="Rice">
        <title>Improvement of the Oryza sativa Nipponbare reference genome using next generation sequence and optical map data.</title>
        <authorList>
            <person name="Kawahara Y."/>
            <person name="de la Bastide M."/>
            <person name="Hamilton J.P."/>
            <person name="Kanamori H."/>
            <person name="McCombie W.R."/>
            <person name="Ouyang S."/>
            <person name="Schwartz D.C."/>
            <person name="Tanaka T."/>
            <person name="Wu J."/>
            <person name="Zhou S."/>
            <person name="Childs K.L."/>
            <person name="Davidson R.M."/>
            <person name="Lin H."/>
            <person name="Quesada-Ocampo L."/>
            <person name="Vaillancourt B."/>
            <person name="Sakai H."/>
            <person name="Lee S.S."/>
            <person name="Kim J."/>
            <person name="Numa H."/>
            <person name="Itoh T."/>
            <person name="Buell C.R."/>
            <person name="Matsumoto T."/>
        </authorList>
    </citation>
    <scope>GENOME REANNOTATION</scope>
    <source>
        <strain>cv. Nipponbare</strain>
    </source>
</reference>
<evidence type="ECO:0000255" key="1">
    <source>
        <dbReference type="PROSITE-ProRule" id="PRU00723"/>
    </source>
</evidence>
<evidence type="ECO:0000256" key="2">
    <source>
        <dbReference type="SAM" id="MobiDB-lite"/>
    </source>
</evidence>
<gene>
    <name type="ordered locus">Os12g0129550</name>
    <name type="ordered locus">LOC_Os12g03554</name>
    <name type="ORF">OsJ_033746</name>
</gene>
<keyword id="KW-0238">DNA-binding</keyword>
<keyword id="KW-0479">Metal-binding</keyword>
<keyword id="KW-1185">Reference proteome</keyword>
<keyword id="KW-0862">Zinc</keyword>
<keyword id="KW-0863">Zinc-finger</keyword>
<dbReference type="EMBL" id="BX000507">
    <property type="status" value="NOT_ANNOTATED_CDS"/>
    <property type="molecule type" value="Genomic_DNA"/>
</dbReference>
<dbReference type="EMBL" id="DP000011">
    <property type="protein sequence ID" value="ABG21865.1"/>
    <property type="molecule type" value="Genomic_DNA"/>
</dbReference>
<dbReference type="EMBL" id="AP014968">
    <property type="protein sequence ID" value="BAT15728.1"/>
    <property type="molecule type" value="Genomic_DNA"/>
</dbReference>
<dbReference type="SMR" id="A3CEM4"/>
<dbReference type="STRING" id="39947.A3CEM4"/>
<dbReference type="PaxDb" id="39947-A3CEM4"/>
<dbReference type="EnsemblPlants" id="Os12t0129550-00">
    <property type="protein sequence ID" value="Os12t0129550-00"/>
    <property type="gene ID" value="Os12g0129550"/>
</dbReference>
<dbReference type="Gramene" id="Os12t0129550-00">
    <property type="protein sequence ID" value="Os12t0129550-00"/>
    <property type="gene ID" value="Os12g0129550"/>
</dbReference>
<dbReference type="HOGENOM" id="CLU_039115_0_0_1"/>
<dbReference type="InParanoid" id="A3CEM4"/>
<dbReference type="OMA" id="TWQYLND"/>
<dbReference type="Proteomes" id="UP000000763">
    <property type="component" value="Chromosome 12"/>
</dbReference>
<dbReference type="Proteomes" id="UP000059680">
    <property type="component" value="Chromosome 12"/>
</dbReference>
<dbReference type="GO" id="GO:0003677">
    <property type="term" value="F:DNA binding"/>
    <property type="evidence" value="ECO:0007669"/>
    <property type="project" value="UniProtKB-KW"/>
</dbReference>
<dbReference type="GO" id="GO:0003729">
    <property type="term" value="F:mRNA binding"/>
    <property type="evidence" value="ECO:0000318"/>
    <property type="project" value="GO_Central"/>
</dbReference>
<dbReference type="GO" id="GO:0008270">
    <property type="term" value="F:zinc ion binding"/>
    <property type="evidence" value="ECO:0007669"/>
    <property type="project" value="UniProtKB-KW"/>
</dbReference>
<dbReference type="InterPro" id="IPR050974">
    <property type="entry name" value="Plant_ZF_CCCH"/>
</dbReference>
<dbReference type="InterPro" id="IPR000571">
    <property type="entry name" value="Znf_CCCH"/>
</dbReference>
<dbReference type="PANTHER" id="PTHR12506">
    <property type="entry name" value="PROTEIN PHOSPHATASE RELATED"/>
    <property type="match status" value="1"/>
</dbReference>
<dbReference type="PANTHER" id="PTHR12506:SF82">
    <property type="entry name" value="ZINC FINGER CCCH DOMAIN-CONTAINING PROTEIN 64-RELATED"/>
    <property type="match status" value="1"/>
</dbReference>
<dbReference type="PROSITE" id="PS50103">
    <property type="entry name" value="ZF_C3H1"/>
    <property type="match status" value="1"/>
</dbReference>
<protein>
    <recommendedName>
        <fullName>Putative zinc finger CCCH domain-containing protein 64</fullName>
        <shortName>OsC3H64</shortName>
    </recommendedName>
</protein>
<accession>A3CEM4</accession>
<accession>H2KX74</accession>
<name>C3H64_ORYSJ</name>